<evidence type="ECO:0000250" key="1">
    <source>
        <dbReference type="UniProtKB" id="Q8BNI4"/>
    </source>
</evidence>
<evidence type="ECO:0000250" key="2">
    <source>
        <dbReference type="UniProtKB" id="Q9GZP9"/>
    </source>
</evidence>
<evidence type="ECO:0000255" key="3"/>
<evidence type="ECO:0000256" key="4">
    <source>
        <dbReference type="SAM" id="MobiDB-lite"/>
    </source>
</evidence>
<evidence type="ECO:0000305" key="5"/>
<dbReference type="EMBL" id="CR858406">
    <property type="protein sequence ID" value="CAH90633.1"/>
    <property type="molecule type" value="mRNA"/>
</dbReference>
<dbReference type="RefSeq" id="NP_001127312.1">
    <property type="nucleotide sequence ID" value="NM_001133840.2"/>
</dbReference>
<dbReference type="SMR" id="Q5RC74"/>
<dbReference type="FunCoup" id="Q5RC74">
    <property type="interactions" value="2342"/>
</dbReference>
<dbReference type="STRING" id="9601.ENSPPYP00000008861"/>
<dbReference type="Ensembl" id="ENSPPYT00000009224.2">
    <property type="protein sequence ID" value="ENSPPYP00000008861.1"/>
    <property type="gene ID" value="ENSPPYG00000007872.2"/>
</dbReference>
<dbReference type="GeneID" id="100174373"/>
<dbReference type="KEGG" id="pon:100174373"/>
<dbReference type="CTD" id="51009"/>
<dbReference type="eggNOG" id="KOG0858">
    <property type="taxonomic scope" value="Eukaryota"/>
</dbReference>
<dbReference type="GeneTree" id="ENSGT00530000063156"/>
<dbReference type="HOGENOM" id="CLU_051898_5_2_1"/>
<dbReference type="InParanoid" id="Q5RC74"/>
<dbReference type="OMA" id="FKSQYWR"/>
<dbReference type="OrthoDB" id="1716531at2759"/>
<dbReference type="TreeFam" id="TF314715"/>
<dbReference type="Proteomes" id="UP000001595">
    <property type="component" value="Chromosome 17"/>
</dbReference>
<dbReference type="GO" id="GO:0005769">
    <property type="term" value="C:early endosome"/>
    <property type="evidence" value="ECO:0007669"/>
    <property type="project" value="Ensembl"/>
</dbReference>
<dbReference type="GO" id="GO:0005789">
    <property type="term" value="C:endoplasmic reticulum membrane"/>
    <property type="evidence" value="ECO:0000250"/>
    <property type="project" value="UniProtKB"/>
</dbReference>
<dbReference type="GO" id="GO:0005770">
    <property type="term" value="C:late endosome"/>
    <property type="evidence" value="ECO:0007669"/>
    <property type="project" value="Ensembl"/>
</dbReference>
<dbReference type="GO" id="GO:0005047">
    <property type="term" value="F:signal recognition particle binding"/>
    <property type="evidence" value="ECO:0000250"/>
    <property type="project" value="UniProtKB"/>
</dbReference>
<dbReference type="GO" id="GO:0030968">
    <property type="term" value="P:endoplasmic reticulum unfolded protein response"/>
    <property type="evidence" value="ECO:0000250"/>
    <property type="project" value="UniProtKB"/>
</dbReference>
<dbReference type="GO" id="GO:0036503">
    <property type="term" value="P:ERAD pathway"/>
    <property type="evidence" value="ECO:0000250"/>
    <property type="project" value="UniProtKB"/>
</dbReference>
<dbReference type="GO" id="GO:1904153">
    <property type="term" value="P:negative regulation of retrograde protein transport, ER to cytosol"/>
    <property type="evidence" value="ECO:0007669"/>
    <property type="project" value="Ensembl"/>
</dbReference>
<dbReference type="GO" id="GO:0030307">
    <property type="term" value="P:positive regulation of cell growth"/>
    <property type="evidence" value="ECO:0000250"/>
    <property type="project" value="UniProtKB"/>
</dbReference>
<dbReference type="GO" id="GO:0008284">
    <property type="term" value="P:positive regulation of cell population proliferation"/>
    <property type="evidence" value="ECO:0000250"/>
    <property type="project" value="UniProtKB"/>
</dbReference>
<dbReference type="GO" id="GO:0030970">
    <property type="term" value="P:retrograde protein transport, ER to cytosol"/>
    <property type="evidence" value="ECO:0000250"/>
    <property type="project" value="UniProtKB"/>
</dbReference>
<dbReference type="GO" id="GO:0001967">
    <property type="term" value="P:suckling behavior"/>
    <property type="evidence" value="ECO:0007669"/>
    <property type="project" value="Ensembl"/>
</dbReference>
<dbReference type="FunFam" id="1.20.1540.10:FF:000016">
    <property type="entry name" value="Derlin"/>
    <property type="match status" value="1"/>
</dbReference>
<dbReference type="InterPro" id="IPR007599">
    <property type="entry name" value="DER1"/>
</dbReference>
<dbReference type="InterPro" id="IPR035952">
    <property type="entry name" value="Rhomboid-like_sf"/>
</dbReference>
<dbReference type="PANTHER" id="PTHR11009">
    <property type="entry name" value="DER1-LIKE PROTEIN, DERLIN"/>
    <property type="match status" value="1"/>
</dbReference>
<dbReference type="Pfam" id="PF04511">
    <property type="entry name" value="DER1"/>
    <property type="match status" value="1"/>
</dbReference>
<dbReference type="SUPFAM" id="SSF144091">
    <property type="entry name" value="Rhomboid-like"/>
    <property type="match status" value="1"/>
</dbReference>
<proteinExistence type="evidence at transcript level"/>
<name>DERL2_PONAB</name>
<organism>
    <name type="scientific">Pongo abelii</name>
    <name type="common">Sumatran orangutan</name>
    <name type="synonym">Pongo pygmaeus abelii</name>
    <dbReference type="NCBI Taxonomy" id="9601"/>
    <lineage>
        <taxon>Eukaryota</taxon>
        <taxon>Metazoa</taxon>
        <taxon>Chordata</taxon>
        <taxon>Craniata</taxon>
        <taxon>Vertebrata</taxon>
        <taxon>Euteleostomi</taxon>
        <taxon>Mammalia</taxon>
        <taxon>Eutheria</taxon>
        <taxon>Euarchontoglires</taxon>
        <taxon>Primates</taxon>
        <taxon>Haplorrhini</taxon>
        <taxon>Catarrhini</taxon>
        <taxon>Hominidae</taxon>
        <taxon>Pongo</taxon>
    </lineage>
</organism>
<gene>
    <name evidence="2" type="primary">DERL2</name>
</gene>
<protein>
    <recommendedName>
        <fullName evidence="5">Derlin-2</fullName>
    </recommendedName>
    <alternativeName>
        <fullName evidence="2">Der1-like protein 2</fullName>
    </alternativeName>
</protein>
<keyword id="KW-0256">Endoplasmic reticulum</keyword>
<keyword id="KW-0472">Membrane</keyword>
<keyword id="KW-1185">Reference proteome</keyword>
<keyword id="KW-0812">Transmembrane</keyword>
<keyword id="KW-1133">Transmembrane helix</keyword>
<accession>Q5RC74</accession>
<sequence length="239" mass="27567">MAYQSLRLEYLQIPPVSRAYTTACVLTTAAVQLELITPFQLYFNPELIFKHFQIWRLITNFLFFGPVGFNFLFNMIFLYRYCRMLEEGSFRGRTADFVFMFLFGGFLMTLFGLFVSLVFLGQAFTIMLVYVWSRRNPYVRMNFFGLLNFQAPFLPWVLMGFSLLLGNSIIVDLLGIAVGHIYFFLEDVFPNQPGGIRILKTPSILKAIFDTPDEDPNYNPLPEERPGGFAWGEGQRLGG</sequence>
<comment type="function">
    <text evidence="2">Functional component of endoplasmic reticulum-associated degradation (ERAD) for misfolded lumenal glycoproteins, but not that of misfolded nonglycoproteins. May act by forming a channel that allows the retrotranslocation of misfolded glycoproteins into the cytosol where they are ubiquitinated and degraded by the proteasome. May mediate the interaction between VCP and misfolded glycoproteins. May also be involved in endoplasmic reticulum stress-induced pre-emptive quality control, a mechanism that selectively attenuates the translocation of newly synthesized proteins into the endoplasmic reticulum and reroutes them to the cytosol for proteasomal degradation.</text>
</comment>
<comment type="subunit">
    <text evidence="1 2">Forms homo- and heterooligomers with DERL3 and, to a lesser extent, with DERL1. Interacts with the SEL1L/SYVN1 and VCP/SELENOS protein complexes. Mediates association between VCP and EDEM1, as well as that between VCP and the misfolded glycoproteins. Interacts with OS9. Interacts with SELENOK and SELENOS. Interacts with the signal recognition particle/SRP and the SRP receptor; in the process of endoplasmic reticulum stress-induced pre-emptive quality control. Interacts with CCDC47 (By similarity).</text>
</comment>
<comment type="subcellular location">
    <subcellularLocation>
        <location evidence="2">Endoplasmic reticulum membrane</location>
        <topology evidence="2">Multi-pass membrane protein</topology>
    </subcellularLocation>
</comment>
<comment type="similarity">
    <text evidence="5">Belongs to the derlin family.</text>
</comment>
<feature type="chain" id="PRO_0000219047" description="Derlin-2">
    <location>
        <begin position="1"/>
        <end position="239"/>
    </location>
</feature>
<feature type="topological domain" description="Cytoplasmic" evidence="3">
    <location>
        <begin position="1"/>
        <end position="56"/>
    </location>
</feature>
<feature type="transmembrane region" description="Helical; Name=1" evidence="3">
    <location>
        <begin position="57"/>
        <end position="77"/>
    </location>
</feature>
<feature type="topological domain" description="Lumenal" evidence="3">
    <location>
        <begin position="78"/>
        <end position="98"/>
    </location>
</feature>
<feature type="transmembrane region" description="Helical; Name=2" evidence="3">
    <location>
        <begin position="99"/>
        <end position="119"/>
    </location>
</feature>
<feature type="topological domain" description="Cytoplasmic" evidence="3">
    <location>
        <begin position="120"/>
        <end position="150"/>
    </location>
</feature>
<feature type="transmembrane region" description="Helical; Name=3" evidence="3">
    <location>
        <begin position="151"/>
        <end position="171"/>
    </location>
</feature>
<feature type="topological domain" description="Lumenal" evidence="3">
    <location>
        <position position="172"/>
    </location>
</feature>
<feature type="transmembrane region" description="Helical; Name=4" evidence="3">
    <location>
        <begin position="173"/>
        <end position="193"/>
    </location>
</feature>
<feature type="topological domain" description="Cytoplasmic" evidence="3">
    <location>
        <begin position="194"/>
        <end position="239"/>
    </location>
</feature>
<feature type="region of interest" description="Disordered" evidence="4">
    <location>
        <begin position="215"/>
        <end position="239"/>
    </location>
</feature>
<feature type="compositionally biased region" description="Gly residues" evidence="4">
    <location>
        <begin position="229"/>
        <end position="239"/>
    </location>
</feature>
<reference key="1">
    <citation type="submission" date="2004-11" db="EMBL/GenBank/DDBJ databases">
        <authorList>
            <consortium name="The German cDNA consortium"/>
        </authorList>
    </citation>
    <scope>NUCLEOTIDE SEQUENCE [LARGE SCALE MRNA]</scope>
    <source>
        <tissue>Brain cortex</tissue>
    </source>
</reference>